<keyword id="KW-1015">Disulfide bond</keyword>
<keyword id="KW-0430">Lectin</keyword>
<keyword id="KW-1185">Reference proteome</keyword>
<keyword id="KW-0732">Signal</keyword>
<sequence>MLLANTAAAVLLLIVCIGASVGLPTVDEENVVQAEQLPILPTADSSKPTDDTVKAIAPQPRYLLPADFAVKNKKFTIGTLGVGSFFRAWRNCIDEGKGLATIESEKEQKYLESLLKASSTGSNYWIGATNIGASNTNKLTWITTDLPVQTKPPFLNVVAKSTCIALTPTGSWTLRNCLNPLNIFPYICEEYF</sequence>
<feature type="signal peptide" evidence="1">
    <location>
        <begin position="1"/>
        <end position="22"/>
    </location>
</feature>
<feature type="chain" id="PRO_0000017555" description="Protein A16">
    <location>
        <begin position="23"/>
        <end position="192"/>
    </location>
</feature>
<feature type="domain" description="C-type lectin" evidence="2">
    <location>
        <begin position="71"/>
        <end position="186"/>
    </location>
</feature>
<feature type="disulfide bond" evidence="2">
    <location>
        <begin position="163"/>
        <end position="177"/>
    </location>
</feature>
<reference key="1">
    <citation type="journal article" date="1996" name="Proc. Natl. Acad. Sci. U.S.A.">
        <title>Identification and characterization of differentially expressed cDNAs of the vector mosquito, Anopheles gambiae.</title>
        <authorList>
            <person name="Dimopoulos G.M."/>
            <person name="Richman A.M."/>
            <person name="della Torre A."/>
            <person name="Kafatos F.C."/>
            <person name="Louis C."/>
        </authorList>
    </citation>
    <scope>NUCLEOTIDE SEQUENCE [MRNA]</scope>
    <scope>TISSUE SPECIFICITY</scope>
    <scope>DEVELOPMENTAL STAGE</scope>
    <scope>INDUCTION</scope>
    <source>
        <strain>G3</strain>
        <tissue>Larva</tissue>
    </source>
</reference>
<reference key="2">
    <citation type="journal article" date="2002" name="Science">
        <title>The genome sequence of the malaria mosquito Anopheles gambiae.</title>
        <authorList>
            <person name="Holt R.A."/>
            <person name="Subramanian G.M."/>
            <person name="Halpern A."/>
            <person name="Sutton G.G."/>
            <person name="Charlab R."/>
            <person name="Nusskern D.R."/>
            <person name="Wincker P."/>
            <person name="Clark A.G."/>
            <person name="Ribeiro J.M.C."/>
            <person name="Wides R."/>
            <person name="Salzberg S.L."/>
            <person name="Loftus B.J."/>
            <person name="Yandell M.D."/>
            <person name="Majoros W.H."/>
            <person name="Rusch D.B."/>
            <person name="Lai Z."/>
            <person name="Kraft C.L."/>
            <person name="Abril J.F."/>
            <person name="Anthouard V."/>
            <person name="Arensburger P."/>
            <person name="Atkinson P.W."/>
            <person name="Baden H."/>
            <person name="de Berardinis V."/>
            <person name="Baldwin D."/>
            <person name="Benes V."/>
            <person name="Biedler J."/>
            <person name="Blass C."/>
            <person name="Bolanos R."/>
            <person name="Boscus D."/>
            <person name="Barnstead M."/>
            <person name="Cai S."/>
            <person name="Center A."/>
            <person name="Chaturverdi K."/>
            <person name="Christophides G.K."/>
            <person name="Chrystal M.A.M."/>
            <person name="Clamp M."/>
            <person name="Cravchik A."/>
            <person name="Curwen V."/>
            <person name="Dana A."/>
            <person name="Delcher A."/>
            <person name="Dew I."/>
            <person name="Evans C.A."/>
            <person name="Flanigan M."/>
            <person name="Grundschober-Freimoser A."/>
            <person name="Friedli L."/>
            <person name="Gu Z."/>
            <person name="Guan P."/>
            <person name="Guigo R."/>
            <person name="Hillenmeyer M.E."/>
            <person name="Hladun S.L."/>
            <person name="Hogan J.R."/>
            <person name="Hong Y.S."/>
            <person name="Hoover J."/>
            <person name="Jaillon O."/>
            <person name="Ke Z."/>
            <person name="Kodira C.D."/>
            <person name="Kokoza E."/>
            <person name="Koutsos A."/>
            <person name="Letunic I."/>
            <person name="Levitsky A.A."/>
            <person name="Liang Y."/>
            <person name="Lin J.-J."/>
            <person name="Lobo N.F."/>
            <person name="Lopez J.R."/>
            <person name="Malek J.A."/>
            <person name="McIntosh T.C."/>
            <person name="Meister S."/>
            <person name="Miller J.R."/>
            <person name="Mobarry C."/>
            <person name="Mongin E."/>
            <person name="Murphy S.D."/>
            <person name="O'Brochta D.A."/>
            <person name="Pfannkoch C."/>
            <person name="Qi R."/>
            <person name="Regier M.A."/>
            <person name="Remington K."/>
            <person name="Shao H."/>
            <person name="Sharakhova M.V."/>
            <person name="Sitter C.D."/>
            <person name="Shetty J."/>
            <person name="Smith T.J."/>
            <person name="Strong R."/>
            <person name="Sun J."/>
            <person name="Thomasova D."/>
            <person name="Ton L.Q."/>
            <person name="Topalis P."/>
            <person name="Tu Z.J."/>
            <person name="Unger M.F."/>
            <person name="Walenz B."/>
            <person name="Wang A.H."/>
            <person name="Wang J."/>
            <person name="Wang M."/>
            <person name="Wang X."/>
            <person name="Woodford K.J."/>
            <person name="Wortman J.R."/>
            <person name="Wu M."/>
            <person name="Yao A."/>
            <person name="Zdobnov E.M."/>
            <person name="Zhang H."/>
            <person name="Zhao Q."/>
            <person name="Zhao S."/>
            <person name="Zhu S.C."/>
            <person name="Zhimulev I."/>
            <person name="Coluzzi M."/>
            <person name="della Torre A."/>
            <person name="Roth C.W."/>
            <person name="Louis C."/>
            <person name="Kalush F."/>
            <person name="Mural R.J."/>
            <person name="Myers E.W."/>
            <person name="Adams M.D."/>
            <person name="Smith H.O."/>
            <person name="Broder S."/>
            <person name="Gardner M.J."/>
            <person name="Fraser C.M."/>
            <person name="Birney E."/>
            <person name="Bork P."/>
            <person name="Brey P.T."/>
            <person name="Venter J.C."/>
            <person name="Weissenbach J."/>
            <person name="Kafatos F.C."/>
            <person name="Collins F.H."/>
            <person name="Hoffman S.L."/>
        </authorList>
    </citation>
    <scope>NUCLEOTIDE SEQUENCE [LARGE SCALE GENOMIC DNA]</scope>
    <source>
        <strain>PEST</strain>
    </source>
</reference>
<name>A16_ANOGA</name>
<proteinExistence type="evidence at transcript level"/>
<dbReference type="EMBL" id="Y08163">
    <property type="protein sequence ID" value="CAA69355.1"/>
    <property type="molecule type" value="mRNA"/>
</dbReference>
<dbReference type="EMBL" id="AAAB01008968">
    <property type="protein sequence ID" value="EAA13236.4"/>
    <property type="molecule type" value="Genomic_DNA"/>
</dbReference>
<dbReference type="RefSeq" id="XP_317999.4">
    <property type="nucleotide sequence ID" value="XM_317999.4"/>
</dbReference>
<dbReference type="SMR" id="Q93118"/>
<dbReference type="PaxDb" id="7165-AGAP004810-PA"/>
<dbReference type="EnsemblMetazoa" id="AGAP004810-RA">
    <property type="protein sequence ID" value="AGAP004810-PA"/>
    <property type="gene ID" value="AGAP004810"/>
</dbReference>
<dbReference type="GeneID" id="1278414"/>
<dbReference type="KEGG" id="aga:1278414"/>
<dbReference type="VEuPathDB" id="VectorBase:AGAMI1_008765"/>
<dbReference type="VEuPathDB" id="VectorBase:AGAP004810"/>
<dbReference type="HOGENOM" id="CLU_1416251_0_0_1"/>
<dbReference type="InParanoid" id="Q93118"/>
<dbReference type="OMA" id="RAWRNCI"/>
<dbReference type="PhylomeDB" id="Q93118"/>
<dbReference type="Proteomes" id="UP000007062">
    <property type="component" value="Chromosome 2L"/>
</dbReference>
<dbReference type="GO" id="GO:0009897">
    <property type="term" value="C:external side of plasma membrane"/>
    <property type="evidence" value="ECO:0000318"/>
    <property type="project" value="GO_Central"/>
</dbReference>
<dbReference type="GO" id="GO:0030246">
    <property type="term" value="F:carbohydrate binding"/>
    <property type="evidence" value="ECO:0000318"/>
    <property type="project" value="GO_Central"/>
</dbReference>
<dbReference type="GO" id="GO:0038187">
    <property type="term" value="F:pattern recognition receptor activity"/>
    <property type="evidence" value="ECO:0000318"/>
    <property type="project" value="GO_Central"/>
</dbReference>
<dbReference type="GO" id="GO:0006955">
    <property type="term" value="P:immune response"/>
    <property type="evidence" value="ECO:0000318"/>
    <property type="project" value="GO_Central"/>
</dbReference>
<dbReference type="CDD" id="cd00037">
    <property type="entry name" value="CLECT"/>
    <property type="match status" value="1"/>
</dbReference>
<dbReference type="Gene3D" id="3.10.100.10">
    <property type="entry name" value="Mannose-Binding Protein A, subunit A"/>
    <property type="match status" value="1"/>
</dbReference>
<dbReference type="InterPro" id="IPR001304">
    <property type="entry name" value="C-type_lectin-like"/>
</dbReference>
<dbReference type="InterPro" id="IPR016186">
    <property type="entry name" value="C-type_lectin-like/link_sf"/>
</dbReference>
<dbReference type="InterPro" id="IPR016187">
    <property type="entry name" value="CTDL_fold"/>
</dbReference>
<dbReference type="Pfam" id="PF00059">
    <property type="entry name" value="Lectin_C"/>
    <property type="match status" value="1"/>
</dbReference>
<dbReference type="SMART" id="SM00034">
    <property type="entry name" value="CLECT"/>
    <property type="match status" value="1"/>
</dbReference>
<dbReference type="SUPFAM" id="SSF56436">
    <property type="entry name" value="C-type lectin-like"/>
    <property type="match status" value="1"/>
</dbReference>
<dbReference type="PROSITE" id="PS50041">
    <property type="entry name" value="C_TYPE_LECTIN_2"/>
    <property type="match status" value="1"/>
</dbReference>
<evidence type="ECO:0000255" key="1"/>
<evidence type="ECO:0000255" key="2">
    <source>
        <dbReference type="PROSITE-ProRule" id="PRU00040"/>
    </source>
</evidence>
<evidence type="ECO:0000269" key="3">
    <source>
    </source>
</evidence>
<comment type="tissue specificity">
    <text evidence="3">Expressed in the gut of adults.</text>
</comment>
<comment type="developmental stage">
    <text evidence="3">Expressed during embryonic, larval and pupal stages. Highest expression is seen in late larval stages.</text>
</comment>
<comment type="induction">
    <text evidence="3">Not induced by bacterial challenge in larvae.</text>
</comment>
<organism>
    <name type="scientific">Anopheles gambiae</name>
    <name type="common">African malaria mosquito</name>
    <dbReference type="NCBI Taxonomy" id="7165"/>
    <lineage>
        <taxon>Eukaryota</taxon>
        <taxon>Metazoa</taxon>
        <taxon>Ecdysozoa</taxon>
        <taxon>Arthropoda</taxon>
        <taxon>Hexapoda</taxon>
        <taxon>Insecta</taxon>
        <taxon>Pterygota</taxon>
        <taxon>Neoptera</taxon>
        <taxon>Endopterygota</taxon>
        <taxon>Diptera</taxon>
        <taxon>Nematocera</taxon>
        <taxon>Culicoidea</taxon>
        <taxon>Culicidae</taxon>
        <taxon>Anophelinae</taxon>
        <taxon>Anopheles</taxon>
    </lineage>
</organism>
<gene>
    <name type="primary">CTL3</name>
    <name type="ORF">AGAP004810</name>
</gene>
<protein>
    <recommendedName>
        <fullName>Protein A16</fullName>
    </recommendedName>
</protein>
<accession>Q93118</accession>
<accession>Q7Q2T9</accession>